<reference key="1">
    <citation type="journal article" date="2000" name="DNA Res.">
        <title>Structural analysis of Arabidopsis thaliana chromosome 3. II. Sequence features of the 4,251,695 bp regions covered by 90 P1, TAC and BAC clones.</title>
        <authorList>
            <person name="Kaneko T."/>
            <person name="Katoh T."/>
            <person name="Sato S."/>
            <person name="Nakamura Y."/>
            <person name="Asamizu E."/>
            <person name="Tabata S."/>
        </authorList>
    </citation>
    <scope>NUCLEOTIDE SEQUENCE [LARGE SCALE GENOMIC DNA]</scope>
    <source>
        <strain>cv. Columbia</strain>
    </source>
</reference>
<reference key="2">
    <citation type="journal article" date="2017" name="Plant J.">
        <title>Araport11: a complete reannotation of the Arabidopsis thaliana reference genome.</title>
        <authorList>
            <person name="Cheng C.Y."/>
            <person name="Krishnakumar V."/>
            <person name="Chan A.P."/>
            <person name="Thibaud-Nissen F."/>
            <person name="Schobel S."/>
            <person name="Town C.D."/>
        </authorList>
    </citation>
    <scope>GENOME REANNOTATION</scope>
    <source>
        <strain>cv. Columbia</strain>
    </source>
</reference>
<reference key="3">
    <citation type="journal article" date="2005" name="Plant Physiol.">
        <title>Genome organization of more than 300 defensin-like genes in Arabidopsis.</title>
        <authorList>
            <person name="Silverstein K.A.T."/>
            <person name="Graham M.A."/>
            <person name="Paape T.D."/>
            <person name="VandenBosch K.A."/>
        </authorList>
    </citation>
    <scope>GENE FAMILY</scope>
</reference>
<dbReference type="EMBL" id="AP000371">
    <property type="status" value="NOT_ANNOTATED_CDS"/>
    <property type="molecule type" value="Genomic_DNA"/>
</dbReference>
<dbReference type="EMBL" id="CP002686">
    <property type="protein sequence ID" value="AEE77369.1"/>
    <property type="molecule type" value="Genomic_DNA"/>
</dbReference>
<dbReference type="RefSeq" id="NP_001030785.1">
    <property type="nucleotide sequence ID" value="NM_001035708.1"/>
</dbReference>
<dbReference type="SMR" id="Q2V3S0"/>
<dbReference type="PaxDb" id="3702-AT3G27831.1"/>
<dbReference type="ProteomicsDB" id="224668"/>
<dbReference type="EnsemblPlants" id="AT3G27831.1">
    <property type="protein sequence ID" value="AT3G27831.1"/>
    <property type="gene ID" value="AT3G27831"/>
</dbReference>
<dbReference type="GeneID" id="3768956"/>
<dbReference type="Gramene" id="AT3G27831.1">
    <property type="protein sequence ID" value="AT3G27831.1"/>
    <property type="gene ID" value="AT3G27831"/>
</dbReference>
<dbReference type="KEGG" id="ath:AT3G27831"/>
<dbReference type="Araport" id="AT3G27831"/>
<dbReference type="TAIR" id="AT3G27831"/>
<dbReference type="HOGENOM" id="CLU_198547_0_0_1"/>
<dbReference type="InParanoid" id="Q2V3S0"/>
<dbReference type="OMA" id="KSMAKAQ"/>
<dbReference type="OrthoDB" id="1071566at2759"/>
<dbReference type="PhylomeDB" id="Q2V3S0"/>
<dbReference type="PRO" id="PR:Q2V3S0"/>
<dbReference type="Proteomes" id="UP000006548">
    <property type="component" value="Chromosome 3"/>
</dbReference>
<dbReference type="ExpressionAtlas" id="Q2V3S0">
    <property type="expression patterns" value="baseline and differential"/>
</dbReference>
<dbReference type="GO" id="GO:0005576">
    <property type="term" value="C:extracellular region"/>
    <property type="evidence" value="ECO:0007669"/>
    <property type="project" value="UniProtKB-SubCell"/>
</dbReference>
<dbReference type="GO" id="GO:0050832">
    <property type="term" value="P:defense response to fungus"/>
    <property type="evidence" value="ECO:0007669"/>
    <property type="project" value="UniProtKB-KW"/>
</dbReference>
<dbReference type="GO" id="GO:0031640">
    <property type="term" value="P:killing of cells of another organism"/>
    <property type="evidence" value="ECO:0007669"/>
    <property type="project" value="UniProtKB-KW"/>
</dbReference>
<dbReference type="CDD" id="cd00107">
    <property type="entry name" value="Knot1"/>
    <property type="match status" value="1"/>
</dbReference>
<dbReference type="Gene3D" id="3.30.30.10">
    <property type="entry name" value="Knottin, scorpion toxin-like"/>
    <property type="match status" value="1"/>
</dbReference>
<dbReference type="InterPro" id="IPR003614">
    <property type="entry name" value="Scorpion_toxin-like"/>
</dbReference>
<dbReference type="InterPro" id="IPR036574">
    <property type="entry name" value="Scorpion_toxin-like_sf"/>
</dbReference>
<dbReference type="SUPFAM" id="SSF57095">
    <property type="entry name" value="Scorpion toxin-like"/>
    <property type="match status" value="1"/>
</dbReference>
<feature type="signal peptide" evidence="2">
    <location>
        <begin position="1"/>
        <end position="26"/>
    </location>
</feature>
<feature type="chain" id="PRO_0000379612" description="Putative defensin-like protein 30">
    <location>
        <begin position="27"/>
        <end position="77"/>
    </location>
</feature>
<feature type="disulfide bond" evidence="1">
    <location>
        <begin position="43"/>
        <end position="63"/>
    </location>
</feature>
<feature type="disulfide bond" evidence="1">
    <location>
        <begin position="49"/>
        <end position="72"/>
    </location>
</feature>
<feature type="disulfide bond" evidence="1">
    <location>
        <begin position="53"/>
        <end position="74"/>
    </location>
</feature>
<proteinExistence type="inferred from homology"/>
<organism>
    <name type="scientific">Arabidopsis thaliana</name>
    <name type="common">Mouse-ear cress</name>
    <dbReference type="NCBI Taxonomy" id="3702"/>
    <lineage>
        <taxon>Eukaryota</taxon>
        <taxon>Viridiplantae</taxon>
        <taxon>Streptophyta</taxon>
        <taxon>Embryophyta</taxon>
        <taxon>Tracheophyta</taxon>
        <taxon>Spermatophyta</taxon>
        <taxon>Magnoliopsida</taxon>
        <taxon>eudicotyledons</taxon>
        <taxon>Gunneridae</taxon>
        <taxon>Pentapetalae</taxon>
        <taxon>rosids</taxon>
        <taxon>malvids</taxon>
        <taxon>Brassicales</taxon>
        <taxon>Brassicaceae</taxon>
        <taxon>Camelineae</taxon>
        <taxon>Arabidopsis</taxon>
    </lineage>
</organism>
<protein>
    <recommendedName>
        <fullName>Putative defensin-like protein 30</fullName>
    </recommendedName>
</protein>
<keyword id="KW-0929">Antimicrobial</keyword>
<keyword id="KW-1015">Disulfide bond</keyword>
<keyword id="KW-0295">Fungicide</keyword>
<keyword id="KW-0611">Plant defense</keyword>
<keyword id="KW-1185">Reference proteome</keyword>
<keyword id="KW-0964">Secreted</keyword>
<keyword id="KW-0732">Signal</keyword>
<comment type="subcellular location">
    <subcellularLocation>
        <location evidence="1">Secreted</location>
    </subcellularLocation>
</comment>
<comment type="similarity">
    <text evidence="3">Belongs to the DEFL family.</text>
</comment>
<comment type="caution">
    <text evidence="3">Lacks 1 of the 4 disulfide bonds, which are conserved features of the family.</text>
</comment>
<gene>
    <name type="ordered locus">At3g27831</name>
    <name type="ORF">K16N12</name>
</gene>
<evidence type="ECO:0000250" key="1"/>
<evidence type="ECO:0000255" key="2"/>
<evidence type="ECO:0000305" key="3"/>
<sequence length="77" mass="8374">MASSSKCAFLVFLCMIVLLAPSEVHAKSMAKAQGGWYLVEGLCSKFPDCNKHCKEQGFLGGQCLKLGVNMLCFCIHT</sequence>
<name>DEF30_ARATH</name>
<accession>Q2V3S0</accession>